<name>TF2B_MIMIV</name>
<sequence length="461" mass="51887">MSHHSETILTAILNTKYLENGSKHKIIELPKTNIKKLIKDFLSVNSNKKIQSDCVLINYFPNALLLDNPNKNSSVKKEQTNQVKIIEKPITNNINKPEDIWDIIDNMDKENNSESLENIQSENSENNDNFTDNNTKKSPTKSRICSGCGSKGTLLEDQSSSVLVCSECGMINDDLLDHGPEWRQYYNDDGRGEGVNRCGCPSNFFFPKSSQGTILAGTGSGRLKRKQKWNSTVYKERSLNDVFEKISTICSKSNIPRIIADTAKILYKKLSDCKHKSGNNVGKQIIIRGHNRISIIAACIYKACEMNKNPRTVKEIARFFGIDEKKVTKGNKQFEKIMKNTDDNMIILDPVNSNSTEDYIRRHCPRLKVNKDHTDIAVKISNNCCRMKLASDHNPQSIAAGAILVMVVFCELNIDKRKISRLFGISDVTIDKIYKKIAPYAPALVDDGATDHLINKLKING</sequence>
<comment type="similarity">
    <text evidence="3">Belongs to the TFIIB family.</text>
</comment>
<gene>
    <name type="ordered locus">MIMI_L250</name>
</gene>
<organism>
    <name type="scientific">Acanthamoeba polyphaga mimivirus</name>
    <name type="common">APMV</name>
    <dbReference type="NCBI Taxonomy" id="212035"/>
    <lineage>
        <taxon>Viruses</taxon>
        <taxon>Varidnaviria</taxon>
        <taxon>Bamfordvirae</taxon>
        <taxon>Nucleocytoviricota</taxon>
        <taxon>Megaviricetes</taxon>
        <taxon>Imitervirales</taxon>
        <taxon>Mimiviridae</taxon>
        <taxon>Megamimivirinae</taxon>
        <taxon>Mimivirus</taxon>
        <taxon>Mimivirus bradfordmassiliense</taxon>
    </lineage>
</organism>
<keyword id="KW-0479">Metal-binding</keyword>
<keyword id="KW-1185">Reference proteome</keyword>
<keyword id="KW-0677">Repeat</keyword>
<keyword id="KW-0804">Transcription</keyword>
<keyword id="KW-0805">Transcription regulation</keyword>
<keyword id="KW-0862">Zinc</keyword>
<keyword id="KW-0863">Zinc-finger</keyword>
<feature type="chain" id="PRO_0000247972" description="Putative transcription initiation factor IIB-like protein">
    <location>
        <begin position="1"/>
        <end position="461"/>
    </location>
</feature>
<feature type="repeat" description="1">
    <location>
        <begin position="246"/>
        <end position="327"/>
    </location>
</feature>
<feature type="repeat" description="2">
    <location>
        <begin position="360"/>
        <end position="430"/>
    </location>
</feature>
<feature type="zinc finger region" description="TFIIB-type">
    <location>
        <begin position="141"/>
        <end position="173"/>
    </location>
</feature>
<feature type="region of interest" description="Disordered" evidence="2">
    <location>
        <begin position="113"/>
        <end position="142"/>
    </location>
</feature>
<feature type="compositionally biased region" description="Low complexity" evidence="2">
    <location>
        <begin position="121"/>
        <end position="137"/>
    </location>
</feature>
<feature type="binding site" evidence="1">
    <location>
        <position position="145"/>
    </location>
    <ligand>
        <name>Zn(2+)</name>
        <dbReference type="ChEBI" id="CHEBI:29105"/>
    </ligand>
</feature>
<feature type="binding site" evidence="1">
    <location>
        <position position="165"/>
    </location>
    <ligand>
        <name>Zn(2+)</name>
        <dbReference type="ChEBI" id="CHEBI:29105"/>
    </ligand>
</feature>
<feature type="binding site" evidence="1">
    <location>
        <position position="168"/>
    </location>
    <ligand>
        <name>Zn(2+)</name>
        <dbReference type="ChEBI" id="CHEBI:29105"/>
    </ligand>
</feature>
<reference key="1">
    <citation type="journal article" date="2004" name="Science">
        <title>The 1.2-megabase genome sequence of Mimivirus.</title>
        <authorList>
            <person name="Raoult D."/>
            <person name="Audic S."/>
            <person name="Robert C."/>
            <person name="Abergel C."/>
            <person name="Renesto P."/>
            <person name="Ogata H."/>
            <person name="La Scola B."/>
            <person name="Susan M."/>
            <person name="Claverie J.-M."/>
        </authorList>
    </citation>
    <scope>NUCLEOTIDE SEQUENCE [LARGE SCALE GENOMIC DNA]</scope>
    <source>
        <strain>Rowbotham-Bradford</strain>
    </source>
</reference>
<accession>Q5UPT1</accession>
<evidence type="ECO:0000250" key="1">
    <source>
        <dbReference type="UniProtKB" id="Q00403"/>
    </source>
</evidence>
<evidence type="ECO:0000256" key="2">
    <source>
        <dbReference type="SAM" id="MobiDB-lite"/>
    </source>
</evidence>
<evidence type="ECO:0000305" key="3"/>
<proteinExistence type="inferred from homology"/>
<organismHost>
    <name type="scientific">Acanthamoeba polyphaga</name>
    <name type="common">Amoeba</name>
    <dbReference type="NCBI Taxonomy" id="5757"/>
</organismHost>
<protein>
    <recommendedName>
        <fullName>Putative transcription initiation factor IIB-like protein</fullName>
    </recommendedName>
</protein>
<dbReference type="EMBL" id="AY653733">
    <property type="protein sequence ID" value="AAV50522.1"/>
    <property type="molecule type" value="Genomic_DNA"/>
</dbReference>
<dbReference type="SMR" id="Q5UPT1"/>
<dbReference type="KEGG" id="vg:9924857"/>
<dbReference type="OrthoDB" id="6587at10239"/>
<dbReference type="Proteomes" id="UP000001134">
    <property type="component" value="Genome"/>
</dbReference>
<dbReference type="GO" id="GO:0097550">
    <property type="term" value="C:transcription preinitiation complex"/>
    <property type="evidence" value="ECO:0007669"/>
    <property type="project" value="TreeGrafter"/>
</dbReference>
<dbReference type="GO" id="GO:0017025">
    <property type="term" value="F:TBP-class protein binding"/>
    <property type="evidence" value="ECO:0007669"/>
    <property type="project" value="InterPro"/>
</dbReference>
<dbReference type="GO" id="GO:0008270">
    <property type="term" value="F:zinc ion binding"/>
    <property type="evidence" value="ECO:0007669"/>
    <property type="project" value="UniProtKB-KW"/>
</dbReference>
<dbReference type="GO" id="GO:0070897">
    <property type="term" value="P:transcription preinitiation complex assembly"/>
    <property type="evidence" value="ECO:0007669"/>
    <property type="project" value="InterPro"/>
</dbReference>
<dbReference type="Gene3D" id="1.10.472.170">
    <property type="match status" value="1"/>
</dbReference>
<dbReference type="Gene3D" id="1.10.472.10">
    <property type="entry name" value="Cyclin-like"/>
    <property type="match status" value="1"/>
</dbReference>
<dbReference type="InterPro" id="IPR036915">
    <property type="entry name" value="Cyclin-like_sf"/>
</dbReference>
<dbReference type="InterPro" id="IPR000812">
    <property type="entry name" value="TFIIB"/>
</dbReference>
<dbReference type="InterPro" id="IPR013150">
    <property type="entry name" value="TFIIB_cyclin"/>
</dbReference>
<dbReference type="InterPro" id="IPR013137">
    <property type="entry name" value="Znf_TFIIB"/>
</dbReference>
<dbReference type="PANTHER" id="PTHR11618:SF13">
    <property type="entry name" value="TRANSCRIPTION INITIATION FACTOR IIB"/>
    <property type="match status" value="1"/>
</dbReference>
<dbReference type="PANTHER" id="PTHR11618">
    <property type="entry name" value="TRANSCRIPTION INITIATION FACTOR IIB-RELATED"/>
    <property type="match status" value="1"/>
</dbReference>
<dbReference type="Pfam" id="PF00382">
    <property type="entry name" value="TFIIB"/>
    <property type="match status" value="2"/>
</dbReference>
<dbReference type="Pfam" id="PF08271">
    <property type="entry name" value="Zn_Ribbon_TF"/>
    <property type="match status" value="1"/>
</dbReference>
<dbReference type="PRINTS" id="PR00685">
    <property type="entry name" value="TIFACTORIIB"/>
</dbReference>
<dbReference type="SUPFAM" id="SSF47954">
    <property type="entry name" value="Cyclin-like"/>
    <property type="match status" value="2"/>
</dbReference>
<dbReference type="SUPFAM" id="SSF57783">
    <property type="entry name" value="Zinc beta-ribbon"/>
    <property type="match status" value="1"/>
</dbReference>